<sequence>MSTAGKVIKCRAAVLWEKNKPFSIEEVEVAPPKAYEVRIKIVATGICRSDDHVVNGSIITPLPAILGHEAGGIVESIGEGVTTVKPGDKVIPLFVPQCGKCRACKHPESNLCTHGDLGRAQGTLMDGTSRFTCKGKPIHHFLGVTTFSEYTVVSEISVTKIDAASPLEKVCLIGCGFSTGYGSAVKVGKVARGSICACVWSGRVGLSAIIGCKAAGAARIIAVDINKDKFAKAKELGATECVNPQDYDKPIYEVLQEMTDGGVDFSFEVIGRLDTKVSALMCCQESHGVSVIVGVPPNAQSLTIDPKVLLSGRSWKGAVFGGYKGKDDVPKLVADFMAKKFPLEPLITNVFPLAKINEGFDLLRAGKSIRTVLTF</sequence>
<gene>
    <name type="primary">ADH1</name>
</gene>
<evidence type="ECO:0000250" key="1"/>
<evidence type="ECO:0000250" key="2">
    <source>
        <dbReference type="UniProtKB" id="P00329"/>
    </source>
</evidence>
<evidence type="ECO:0000250" key="3">
    <source>
        <dbReference type="UniProtKB" id="P06757"/>
    </source>
</evidence>
<evidence type="ECO:0000305" key="4"/>
<keyword id="KW-0007">Acetylation</keyword>
<keyword id="KW-0963">Cytoplasm</keyword>
<keyword id="KW-0479">Metal-binding</keyword>
<keyword id="KW-0520">NAD</keyword>
<keyword id="KW-0560">Oxidoreductase</keyword>
<keyword id="KW-0862">Zinc</keyword>
<accession>Q9Z2M2</accession>
<name>ADH1_GEOAT</name>
<feature type="initiator methionine" description="Removed" evidence="3">
    <location>
        <position position="1"/>
    </location>
</feature>
<feature type="chain" id="PRO_0000254949" description="Alcohol dehydrogenase 1">
    <location>
        <begin position="2"/>
        <end position="375"/>
    </location>
</feature>
<feature type="binding site" evidence="1">
    <location>
        <position position="47"/>
    </location>
    <ligand>
        <name>Zn(2+)</name>
        <dbReference type="ChEBI" id="CHEBI:29105"/>
        <label>1</label>
        <note>catalytic</note>
    </ligand>
</feature>
<feature type="binding site" evidence="1">
    <location>
        <position position="68"/>
    </location>
    <ligand>
        <name>Zn(2+)</name>
        <dbReference type="ChEBI" id="CHEBI:29105"/>
        <label>1</label>
        <note>catalytic</note>
    </ligand>
</feature>
<feature type="binding site" evidence="1">
    <location>
        <position position="98"/>
    </location>
    <ligand>
        <name>Zn(2+)</name>
        <dbReference type="ChEBI" id="CHEBI:29105"/>
        <label>2</label>
    </ligand>
</feature>
<feature type="binding site" evidence="1">
    <location>
        <position position="101"/>
    </location>
    <ligand>
        <name>Zn(2+)</name>
        <dbReference type="ChEBI" id="CHEBI:29105"/>
        <label>2</label>
    </ligand>
</feature>
<feature type="binding site" evidence="1">
    <location>
        <position position="104"/>
    </location>
    <ligand>
        <name>Zn(2+)</name>
        <dbReference type="ChEBI" id="CHEBI:29105"/>
        <label>2</label>
    </ligand>
</feature>
<feature type="binding site" evidence="1">
    <location>
        <position position="112"/>
    </location>
    <ligand>
        <name>Zn(2+)</name>
        <dbReference type="ChEBI" id="CHEBI:29105"/>
        <label>2</label>
    </ligand>
</feature>
<feature type="binding site" evidence="1">
    <location>
        <position position="175"/>
    </location>
    <ligand>
        <name>Zn(2+)</name>
        <dbReference type="ChEBI" id="CHEBI:29105"/>
        <label>1</label>
        <note>catalytic</note>
    </ligand>
</feature>
<feature type="binding site" evidence="1">
    <location>
        <begin position="200"/>
        <end position="205"/>
    </location>
    <ligand>
        <name>NAD(+)</name>
        <dbReference type="ChEBI" id="CHEBI:57540"/>
    </ligand>
</feature>
<feature type="binding site" evidence="1">
    <location>
        <position position="224"/>
    </location>
    <ligand>
        <name>NAD(+)</name>
        <dbReference type="ChEBI" id="CHEBI:57540"/>
    </ligand>
</feature>
<feature type="binding site" evidence="1">
    <location>
        <position position="229"/>
    </location>
    <ligand>
        <name>NAD(+)</name>
        <dbReference type="ChEBI" id="CHEBI:57540"/>
    </ligand>
</feature>
<feature type="binding site" evidence="1">
    <location>
        <begin position="293"/>
        <end position="295"/>
    </location>
    <ligand>
        <name>NAD(+)</name>
        <dbReference type="ChEBI" id="CHEBI:57540"/>
    </ligand>
</feature>
<feature type="binding site" evidence="1">
    <location>
        <position position="370"/>
    </location>
    <ligand>
        <name>NAD(+)</name>
        <dbReference type="ChEBI" id="CHEBI:57540"/>
    </ligand>
</feature>
<feature type="modified residue" description="N-acetylserine" evidence="3">
    <location>
        <position position="2"/>
    </location>
</feature>
<feature type="modified residue" description="N6-succinyllysine" evidence="2">
    <location>
        <position position="234"/>
    </location>
</feature>
<feature type="modified residue" description="N6-succinyllysine" evidence="2">
    <location>
        <position position="340"/>
    </location>
</feature>
<protein>
    <recommendedName>
        <fullName>Alcohol dehydrogenase 1</fullName>
        <ecNumber>1.1.1.1</ecNumber>
    </recommendedName>
    <alternativeName>
        <fullName>Alcohol dehydrogenase A subunit</fullName>
    </alternativeName>
</protein>
<reference key="1">
    <citation type="journal article" date="1998" name="Mol. Biol. Evol.">
        <title>Nucleotide polymorphism at the alcohol dehydrogenase locus of pocket gophers, genus Geomys.</title>
        <authorList>
            <person name="Bradley R.D."/>
            <person name="Adkins R.M."/>
            <person name="Honeycutt R.L."/>
            <person name="McDonald J.H."/>
        </authorList>
    </citation>
    <scope>NUCLEOTIDE SEQUENCE [MRNA]</scope>
</reference>
<dbReference type="EC" id="1.1.1.1"/>
<dbReference type="EMBL" id="AF044730">
    <property type="protein sequence ID" value="AAC98959.1"/>
    <property type="molecule type" value="mRNA"/>
</dbReference>
<dbReference type="SMR" id="Q9Z2M2"/>
<dbReference type="GO" id="GO:0005829">
    <property type="term" value="C:cytosol"/>
    <property type="evidence" value="ECO:0007669"/>
    <property type="project" value="TreeGrafter"/>
</dbReference>
<dbReference type="GO" id="GO:0004745">
    <property type="term" value="F:all-trans-retinol dehydrogenase (NAD+) activity"/>
    <property type="evidence" value="ECO:0007669"/>
    <property type="project" value="TreeGrafter"/>
</dbReference>
<dbReference type="GO" id="GO:0008270">
    <property type="term" value="F:zinc ion binding"/>
    <property type="evidence" value="ECO:0007669"/>
    <property type="project" value="InterPro"/>
</dbReference>
<dbReference type="GO" id="GO:0042573">
    <property type="term" value="P:retinoic acid metabolic process"/>
    <property type="evidence" value="ECO:0007669"/>
    <property type="project" value="TreeGrafter"/>
</dbReference>
<dbReference type="GO" id="GO:0042572">
    <property type="term" value="P:retinol metabolic process"/>
    <property type="evidence" value="ECO:0007669"/>
    <property type="project" value="TreeGrafter"/>
</dbReference>
<dbReference type="CDD" id="cd08299">
    <property type="entry name" value="alcohol_DH_class_I_II_IV"/>
    <property type="match status" value="1"/>
</dbReference>
<dbReference type="FunFam" id="3.40.50.720:FF:000003">
    <property type="entry name" value="S-(hydroxymethyl)glutathione dehydrogenase"/>
    <property type="match status" value="1"/>
</dbReference>
<dbReference type="FunFam" id="3.90.180.10:FF:000001">
    <property type="entry name" value="S-(hydroxymethyl)glutathione dehydrogenase"/>
    <property type="match status" value="1"/>
</dbReference>
<dbReference type="Gene3D" id="3.90.180.10">
    <property type="entry name" value="Medium-chain alcohol dehydrogenases, catalytic domain"/>
    <property type="match status" value="1"/>
</dbReference>
<dbReference type="Gene3D" id="3.40.50.720">
    <property type="entry name" value="NAD(P)-binding Rossmann-like Domain"/>
    <property type="match status" value="1"/>
</dbReference>
<dbReference type="InterPro" id="IPR013149">
    <property type="entry name" value="ADH-like_C"/>
</dbReference>
<dbReference type="InterPro" id="IPR013154">
    <property type="entry name" value="ADH-like_N"/>
</dbReference>
<dbReference type="InterPro" id="IPR002328">
    <property type="entry name" value="ADH_Zn_CS"/>
</dbReference>
<dbReference type="InterPro" id="IPR011032">
    <property type="entry name" value="GroES-like_sf"/>
</dbReference>
<dbReference type="InterPro" id="IPR036291">
    <property type="entry name" value="NAD(P)-bd_dom_sf"/>
</dbReference>
<dbReference type="InterPro" id="IPR020843">
    <property type="entry name" value="PKS_ER"/>
</dbReference>
<dbReference type="PANTHER" id="PTHR43880">
    <property type="entry name" value="ALCOHOL DEHYDROGENASE"/>
    <property type="match status" value="1"/>
</dbReference>
<dbReference type="PANTHER" id="PTHR43880:SF1">
    <property type="entry name" value="ALCOHOL DEHYDROGENASE 1A"/>
    <property type="match status" value="1"/>
</dbReference>
<dbReference type="Pfam" id="PF08240">
    <property type="entry name" value="ADH_N"/>
    <property type="match status" value="1"/>
</dbReference>
<dbReference type="Pfam" id="PF00107">
    <property type="entry name" value="ADH_zinc_N"/>
    <property type="match status" value="1"/>
</dbReference>
<dbReference type="SMART" id="SM00829">
    <property type="entry name" value="PKS_ER"/>
    <property type="match status" value="1"/>
</dbReference>
<dbReference type="SUPFAM" id="SSF50129">
    <property type="entry name" value="GroES-like"/>
    <property type="match status" value="2"/>
</dbReference>
<dbReference type="SUPFAM" id="SSF51735">
    <property type="entry name" value="NAD(P)-binding Rossmann-fold domains"/>
    <property type="match status" value="1"/>
</dbReference>
<dbReference type="PROSITE" id="PS00059">
    <property type="entry name" value="ADH_ZINC"/>
    <property type="match status" value="1"/>
</dbReference>
<proteinExistence type="evidence at transcript level"/>
<comment type="catalytic activity">
    <reaction>
        <text>a primary alcohol + NAD(+) = an aldehyde + NADH + H(+)</text>
        <dbReference type="Rhea" id="RHEA:10736"/>
        <dbReference type="ChEBI" id="CHEBI:15378"/>
        <dbReference type="ChEBI" id="CHEBI:15734"/>
        <dbReference type="ChEBI" id="CHEBI:17478"/>
        <dbReference type="ChEBI" id="CHEBI:57540"/>
        <dbReference type="ChEBI" id="CHEBI:57945"/>
        <dbReference type="EC" id="1.1.1.1"/>
    </reaction>
</comment>
<comment type="catalytic activity">
    <reaction>
        <text>a secondary alcohol + NAD(+) = a ketone + NADH + H(+)</text>
        <dbReference type="Rhea" id="RHEA:10740"/>
        <dbReference type="ChEBI" id="CHEBI:15378"/>
        <dbReference type="ChEBI" id="CHEBI:17087"/>
        <dbReference type="ChEBI" id="CHEBI:35681"/>
        <dbReference type="ChEBI" id="CHEBI:57540"/>
        <dbReference type="ChEBI" id="CHEBI:57945"/>
        <dbReference type="EC" id="1.1.1.1"/>
    </reaction>
</comment>
<comment type="cofactor">
    <cofactor evidence="1">
        <name>Zn(2+)</name>
        <dbReference type="ChEBI" id="CHEBI:29105"/>
    </cofactor>
    <text evidence="1">Binds 2 Zn(2+) ions per subunit.</text>
</comment>
<comment type="subunit">
    <text evidence="1">Homodimer.</text>
</comment>
<comment type="subcellular location">
    <subcellularLocation>
        <location evidence="1">Cytoplasm</location>
    </subcellularLocation>
</comment>
<comment type="similarity">
    <text evidence="4">Belongs to the zinc-containing alcohol dehydrogenase family. Class-I subfamily.</text>
</comment>
<organism>
    <name type="scientific">Geomys attwateri</name>
    <name type="common">Attwater's pocket gopher</name>
    <name type="synonym">Geomys bursarius attwateri</name>
    <dbReference type="NCBI Taxonomy" id="72447"/>
    <lineage>
        <taxon>Eukaryota</taxon>
        <taxon>Metazoa</taxon>
        <taxon>Chordata</taxon>
        <taxon>Craniata</taxon>
        <taxon>Vertebrata</taxon>
        <taxon>Euteleostomi</taxon>
        <taxon>Mammalia</taxon>
        <taxon>Eutheria</taxon>
        <taxon>Euarchontoglires</taxon>
        <taxon>Glires</taxon>
        <taxon>Rodentia</taxon>
        <taxon>Castorimorpha</taxon>
        <taxon>Geomyidae</taxon>
        <taxon>Geomys</taxon>
    </lineage>
</organism>